<accession>Q04YY5</accession>
<organism>
    <name type="scientific">Leptospira borgpetersenii serovar Hardjo-bovis (strain L550)</name>
    <dbReference type="NCBI Taxonomy" id="355276"/>
    <lineage>
        <taxon>Bacteria</taxon>
        <taxon>Pseudomonadati</taxon>
        <taxon>Spirochaetota</taxon>
        <taxon>Spirochaetia</taxon>
        <taxon>Leptospirales</taxon>
        <taxon>Leptospiraceae</taxon>
        <taxon>Leptospira</taxon>
    </lineage>
</organism>
<protein>
    <recommendedName>
        <fullName evidence="1">Holliday junction branch migration complex subunit RuvB</fullName>
        <ecNumber evidence="1">3.6.4.-</ecNumber>
    </recommendedName>
</protein>
<reference key="1">
    <citation type="journal article" date="2006" name="Proc. Natl. Acad. Sci. U.S.A.">
        <title>Genome reduction in Leptospira borgpetersenii reflects limited transmission potential.</title>
        <authorList>
            <person name="Bulach D.M."/>
            <person name="Zuerner R.L."/>
            <person name="Wilson P."/>
            <person name="Seemann T."/>
            <person name="McGrath A."/>
            <person name="Cullen P.A."/>
            <person name="Davis J."/>
            <person name="Johnson M."/>
            <person name="Kuczek E."/>
            <person name="Alt D.P."/>
            <person name="Peterson-Burch B."/>
            <person name="Coppel R.L."/>
            <person name="Rood J.I."/>
            <person name="Davies J.K."/>
            <person name="Adler B."/>
        </authorList>
    </citation>
    <scope>NUCLEOTIDE SEQUENCE [LARGE SCALE GENOMIC DNA]</scope>
    <source>
        <strain>L550</strain>
    </source>
</reference>
<dbReference type="EC" id="3.6.4.-" evidence="1"/>
<dbReference type="EMBL" id="CP000348">
    <property type="protein sequence ID" value="ABJ79710.1"/>
    <property type="molecule type" value="Genomic_DNA"/>
</dbReference>
<dbReference type="RefSeq" id="WP_011670715.1">
    <property type="nucleotide sequence ID" value="NC_008508.1"/>
</dbReference>
<dbReference type="SMR" id="Q04YY5"/>
<dbReference type="KEGG" id="lbl:LBL_2317"/>
<dbReference type="HOGENOM" id="CLU_055599_1_0_12"/>
<dbReference type="GO" id="GO:0005737">
    <property type="term" value="C:cytoplasm"/>
    <property type="evidence" value="ECO:0007669"/>
    <property type="project" value="UniProtKB-SubCell"/>
</dbReference>
<dbReference type="GO" id="GO:0048476">
    <property type="term" value="C:Holliday junction resolvase complex"/>
    <property type="evidence" value="ECO:0007669"/>
    <property type="project" value="UniProtKB-UniRule"/>
</dbReference>
<dbReference type="GO" id="GO:0005524">
    <property type="term" value="F:ATP binding"/>
    <property type="evidence" value="ECO:0007669"/>
    <property type="project" value="UniProtKB-UniRule"/>
</dbReference>
<dbReference type="GO" id="GO:0016887">
    <property type="term" value="F:ATP hydrolysis activity"/>
    <property type="evidence" value="ECO:0007669"/>
    <property type="project" value="InterPro"/>
</dbReference>
<dbReference type="GO" id="GO:0000400">
    <property type="term" value="F:four-way junction DNA binding"/>
    <property type="evidence" value="ECO:0007669"/>
    <property type="project" value="UniProtKB-UniRule"/>
</dbReference>
<dbReference type="GO" id="GO:0009378">
    <property type="term" value="F:four-way junction helicase activity"/>
    <property type="evidence" value="ECO:0007669"/>
    <property type="project" value="InterPro"/>
</dbReference>
<dbReference type="GO" id="GO:0006310">
    <property type="term" value="P:DNA recombination"/>
    <property type="evidence" value="ECO:0007669"/>
    <property type="project" value="UniProtKB-UniRule"/>
</dbReference>
<dbReference type="GO" id="GO:0006281">
    <property type="term" value="P:DNA repair"/>
    <property type="evidence" value="ECO:0007669"/>
    <property type="project" value="UniProtKB-UniRule"/>
</dbReference>
<dbReference type="CDD" id="cd00009">
    <property type="entry name" value="AAA"/>
    <property type="match status" value="1"/>
</dbReference>
<dbReference type="Gene3D" id="1.10.8.60">
    <property type="match status" value="1"/>
</dbReference>
<dbReference type="Gene3D" id="3.40.50.300">
    <property type="entry name" value="P-loop containing nucleotide triphosphate hydrolases"/>
    <property type="match status" value="1"/>
</dbReference>
<dbReference type="Gene3D" id="1.10.10.10">
    <property type="entry name" value="Winged helix-like DNA-binding domain superfamily/Winged helix DNA-binding domain"/>
    <property type="match status" value="1"/>
</dbReference>
<dbReference type="HAMAP" id="MF_00016">
    <property type="entry name" value="DNA_HJ_migration_RuvB"/>
    <property type="match status" value="1"/>
</dbReference>
<dbReference type="InterPro" id="IPR003593">
    <property type="entry name" value="AAA+_ATPase"/>
</dbReference>
<dbReference type="InterPro" id="IPR041445">
    <property type="entry name" value="AAA_lid_4"/>
</dbReference>
<dbReference type="InterPro" id="IPR004605">
    <property type="entry name" value="DNA_helicase_Holl-junc_RuvB"/>
</dbReference>
<dbReference type="InterPro" id="IPR027417">
    <property type="entry name" value="P-loop_NTPase"/>
</dbReference>
<dbReference type="InterPro" id="IPR008824">
    <property type="entry name" value="RuvB-like_N"/>
</dbReference>
<dbReference type="InterPro" id="IPR008823">
    <property type="entry name" value="RuvB_C"/>
</dbReference>
<dbReference type="InterPro" id="IPR036388">
    <property type="entry name" value="WH-like_DNA-bd_sf"/>
</dbReference>
<dbReference type="InterPro" id="IPR036390">
    <property type="entry name" value="WH_DNA-bd_sf"/>
</dbReference>
<dbReference type="NCBIfam" id="NF000868">
    <property type="entry name" value="PRK00080.1"/>
    <property type="match status" value="1"/>
</dbReference>
<dbReference type="NCBIfam" id="TIGR00635">
    <property type="entry name" value="ruvB"/>
    <property type="match status" value="1"/>
</dbReference>
<dbReference type="PANTHER" id="PTHR42848">
    <property type="match status" value="1"/>
</dbReference>
<dbReference type="PANTHER" id="PTHR42848:SF1">
    <property type="entry name" value="HOLLIDAY JUNCTION BRANCH MIGRATION COMPLEX SUBUNIT RUVB"/>
    <property type="match status" value="1"/>
</dbReference>
<dbReference type="Pfam" id="PF17864">
    <property type="entry name" value="AAA_lid_4"/>
    <property type="match status" value="1"/>
</dbReference>
<dbReference type="Pfam" id="PF05491">
    <property type="entry name" value="RuvB_C"/>
    <property type="match status" value="1"/>
</dbReference>
<dbReference type="Pfam" id="PF05496">
    <property type="entry name" value="RuvB_N"/>
    <property type="match status" value="1"/>
</dbReference>
<dbReference type="SMART" id="SM00382">
    <property type="entry name" value="AAA"/>
    <property type="match status" value="1"/>
</dbReference>
<dbReference type="SUPFAM" id="SSF52540">
    <property type="entry name" value="P-loop containing nucleoside triphosphate hydrolases"/>
    <property type="match status" value="1"/>
</dbReference>
<dbReference type="SUPFAM" id="SSF46785">
    <property type="entry name" value="Winged helix' DNA-binding domain"/>
    <property type="match status" value="1"/>
</dbReference>
<name>RUVB_LEPBL</name>
<gene>
    <name evidence="1" type="primary">ruvB</name>
    <name type="ordered locus">LBL_2317</name>
</gene>
<proteinExistence type="inferred from homology"/>
<evidence type="ECO:0000255" key="1">
    <source>
        <dbReference type="HAMAP-Rule" id="MF_00016"/>
    </source>
</evidence>
<comment type="function">
    <text evidence="1">The RuvA-RuvB-RuvC complex processes Holliday junction (HJ) DNA during genetic recombination and DNA repair, while the RuvA-RuvB complex plays an important role in the rescue of blocked DNA replication forks via replication fork reversal (RFR). RuvA specifically binds to HJ cruciform DNA, conferring on it an open structure. The RuvB hexamer acts as an ATP-dependent pump, pulling dsDNA into and through the RuvAB complex. RuvB forms 2 homohexamers on either side of HJ DNA bound by 1 or 2 RuvA tetramers; 4 subunits per hexamer contact DNA at a time. Coordinated motions by a converter formed by DNA-disengaged RuvB subunits stimulates ATP hydrolysis and nucleotide exchange. Immobilization of the converter enables RuvB to convert the ATP-contained energy into a lever motion, pulling 2 nucleotides of DNA out of the RuvA tetramer per ATP hydrolyzed, thus driving DNA branch migration. The RuvB motors rotate together with the DNA substrate, which together with the progressing nucleotide cycle form the mechanistic basis for DNA recombination by continuous HJ branch migration. Branch migration allows RuvC to scan DNA until it finds its consensus sequence, where it cleaves and resolves cruciform DNA.</text>
</comment>
<comment type="catalytic activity">
    <reaction evidence="1">
        <text>ATP + H2O = ADP + phosphate + H(+)</text>
        <dbReference type="Rhea" id="RHEA:13065"/>
        <dbReference type="ChEBI" id="CHEBI:15377"/>
        <dbReference type="ChEBI" id="CHEBI:15378"/>
        <dbReference type="ChEBI" id="CHEBI:30616"/>
        <dbReference type="ChEBI" id="CHEBI:43474"/>
        <dbReference type="ChEBI" id="CHEBI:456216"/>
    </reaction>
</comment>
<comment type="subunit">
    <text evidence="1">Homohexamer. Forms an RuvA(8)-RuvB(12)-Holliday junction (HJ) complex. HJ DNA is sandwiched between 2 RuvA tetramers; dsDNA enters through RuvA and exits via RuvB. An RuvB hexamer assembles on each DNA strand where it exits the tetramer. Each RuvB hexamer is contacted by two RuvA subunits (via domain III) on 2 adjacent RuvB subunits; this complex drives branch migration. In the full resolvosome a probable DNA-RuvA(4)-RuvB(12)-RuvC(2) complex forms which resolves the HJ.</text>
</comment>
<comment type="subcellular location">
    <subcellularLocation>
        <location evidence="1">Cytoplasm</location>
    </subcellularLocation>
</comment>
<comment type="domain">
    <text evidence="1">Has 3 domains, the large (RuvB-L) and small ATPase (RuvB-S) domains and the C-terminal head (RuvB-H) domain. The head domain binds DNA, while the ATPase domains jointly bind ATP, ADP or are empty depending on the state of the subunit in the translocation cycle. During a single DNA translocation step the structure of each domain remains the same, but their relative positions change.</text>
</comment>
<comment type="similarity">
    <text evidence="1">Belongs to the RuvB family.</text>
</comment>
<sequence length="341" mass="37996">MAKSHTLNPEEEFEEESGLRPSLLSEFIGQKEVLNNLTVYVQAAKNRKRALDHVLISGPPGLGKTTLAGIVSNELGTRLTITSAPVITKGADLARLLTSMGENEILFIDEIHTLHKKLEEILYPAMENYMIDLVIGEGVTAQMVQIPLKPFTLVGATTRSGLISEPLKSRFGIQLRLDYYNDEEMKEIVLRSSRILGVKIEDDAALEIGKRSRKTPRIANHLLKRIRDFSEVEGNLSVKKGLCLKAFEKMGIDDLGLDGMDRQILGCMIDRYKGGPVGLKAIAVVVGEEEKTIEDTYESFMVRIGLINRTPAGRVATEKAYRQLKRMQDFSENHGQDPTLF</sequence>
<feature type="chain" id="PRO_1000001423" description="Holliday junction branch migration complex subunit RuvB">
    <location>
        <begin position="1"/>
        <end position="341"/>
    </location>
</feature>
<feature type="region of interest" description="Large ATPase domain (RuvB-L)" evidence="1">
    <location>
        <begin position="1"/>
        <end position="180"/>
    </location>
</feature>
<feature type="region of interest" description="Small ATPAse domain (RuvB-S)" evidence="1">
    <location>
        <begin position="181"/>
        <end position="251"/>
    </location>
</feature>
<feature type="region of interest" description="Head domain (RuvB-H)" evidence="1">
    <location>
        <begin position="254"/>
        <end position="341"/>
    </location>
</feature>
<feature type="binding site" evidence="1">
    <location>
        <position position="19"/>
    </location>
    <ligand>
        <name>ATP</name>
        <dbReference type="ChEBI" id="CHEBI:30616"/>
    </ligand>
</feature>
<feature type="binding site" evidence="1">
    <location>
        <position position="20"/>
    </location>
    <ligand>
        <name>ATP</name>
        <dbReference type="ChEBI" id="CHEBI:30616"/>
    </ligand>
</feature>
<feature type="binding site" evidence="1">
    <location>
        <position position="61"/>
    </location>
    <ligand>
        <name>ATP</name>
        <dbReference type="ChEBI" id="CHEBI:30616"/>
    </ligand>
</feature>
<feature type="binding site" evidence="1">
    <location>
        <position position="64"/>
    </location>
    <ligand>
        <name>ATP</name>
        <dbReference type="ChEBI" id="CHEBI:30616"/>
    </ligand>
</feature>
<feature type="binding site" evidence="1">
    <location>
        <position position="65"/>
    </location>
    <ligand>
        <name>ATP</name>
        <dbReference type="ChEBI" id="CHEBI:30616"/>
    </ligand>
</feature>
<feature type="binding site" evidence="1">
    <location>
        <position position="65"/>
    </location>
    <ligand>
        <name>Mg(2+)</name>
        <dbReference type="ChEBI" id="CHEBI:18420"/>
    </ligand>
</feature>
<feature type="binding site" evidence="1">
    <location>
        <position position="66"/>
    </location>
    <ligand>
        <name>ATP</name>
        <dbReference type="ChEBI" id="CHEBI:30616"/>
    </ligand>
</feature>
<feature type="binding site" evidence="1">
    <location>
        <position position="170"/>
    </location>
    <ligand>
        <name>ATP</name>
        <dbReference type="ChEBI" id="CHEBI:30616"/>
    </ligand>
</feature>
<feature type="binding site" evidence="1">
    <location>
        <position position="180"/>
    </location>
    <ligand>
        <name>ATP</name>
        <dbReference type="ChEBI" id="CHEBI:30616"/>
    </ligand>
</feature>
<feature type="binding site" evidence="1">
    <location>
        <position position="217"/>
    </location>
    <ligand>
        <name>ATP</name>
        <dbReference type="ChEBI" id="CHEBI:30616"/>
    </ligand>
</feature>
<feature type="binding site" evidence="1">
    <location>
        <position position="309"/>
    </location>
    <ligand>
        <name>DNA</name>
        <dbReference type="ChEBI" id="CHEBI:16991"/>
    </ligand>
</feature>
<feature type="binding site" evidence="1">
    <location>
        <position position="314"/>
    </location>
    <ligand>
        <name>DNA</name>
        <dbReference type="ChEBI" id="CHEBI:16991"/>
    </ligand>
</feature>
<keyword id="KW-0067">ATP-binding</keyword>
<keyword id="KW-0963">Cytoplasm</keyword>
<keyword id="KW-0227">DNA damage</keyword>
<keyword id="KW-0233">DNA recombination</keyword>
<keyword id="KW-0234">DNA repair</keyword>
<keyword id="KW-0238">DNA-binding</keyword>
<keyword id="KW-0378">Hydrolase</keyword>
<keyword id="KW-0547">Nucleotide-binding</keyword>